<reference key="1">
    <citation type="submission" date="2007-05" db="EMBL/GenBank/DDBJ databases">
        <title>Complete sequence of chromosome of Acidiphilium cryptum JF-5.</title>
        <authorList>
            <consortium name="US DOE Joint Genome Institute"/>
            <person name="Copeland A."/>
            <person name="Lucas S."/>
            <person name="Lapidus A."/>
            <person name="Barry K."/>
            <person name="Detter J.C."/>
            <person name="Glavina del Rio T."/>
            <person name="Hammon N."/>
            <person name="Israni S."/>
            <person name="Dalin E."/>
            <person name="Tice H."/>
            <person name="Pitluck S."/>
            <person name="Sims D."/>
            <person name="Brettin T."/>
            <person name="Bruce D."/>
            <person name="Han C."/>
            <person name="Schmutz J."/>
            <person name="Larimer F."/>
            <person name="Land M."/>
            <person name="Hauser L."/>
            <person name="Kyrpides N."/>
            <person name="Kim E."/>
            <person name="Magnuson T."/>
            <person name="Richardson P."/>
        </authorList>
    </citation>
    <scope>NUCLEOTIDE SEQUENCE [LARGE SCALE GENOMIC DNA]</scope>
    <source>
        <strain>JF-5</strain>
    </source>
</reference>
<protein>
    <recommendedName>
        <fullName evidence="1">tRNA modification GTPase MnmE</fullName>
        <ecNumber evidence="1">3.6.-.-</ecNumber>
    </recommendedName>
</protein>
<dbReference type="EC" id="3.6.-.-" evidence="1"/>
<dbReference type="EMBL" id="CP000697">
    <property type="protein sequence ID" value="ABQ31601.1"/>
    <property type="molecule type" value="Genomic_DNA"/>
</dbReference>
<dbReference type="RefSeq" id="WP_012040034.1">
    <property type="nucleotide sequence ID" value="NC_009484.1"/>
</dbReference>
<dbReference type="SMR" id="A5G169"/>
<dbReference type="STRING" id="349163.Acry_2407"/>
<dbReference type="KEGG" id="acr:Acry_2407"/>
<dbReference type="eggNOG" id="COG0486">
    <property type="taxonomic scope" value="Bacteria"/>
</dbReference>
<dbReference type="HOGENOM" id="CLU_019624_4_1_5"/>
<dbReference type="Proteomes" id="UP000000245">
    <property type="component" value="Chromosome"/>
</dbReference>
<dbReference type="GO" id="GO:0005737">
    <property type="term" value="C:cytoplasm"/>
    <property type="evidence" value="ECO:0007669"/>
    <property type="project" value="UniProtKB-SubCell"/>
</dbReference>
<dbReference type="GO" id="GO:0005525">
    <property type="term" value="F:GTP binding"/>
    <property type="evidence" value="ECO:0007669"/>
    <property type="project" value="UniProtKB-UniRule"/>
</dbReference>
<dbReference type="GO" id="GO:0003924">
    <property type="term" value="F:GTPase activity"/>
    <property type="evidence" value="ECO:0007669"/>
    <property type="project" value="UniProtKB-UniRule"/>
</dbReference>
<dbReference type="GO" id="GO:0046872">
    <property type="term" value="F:metal ion binding"/>
    <property type="evidence" value="ECO:0007669"/>
    <property type="project" value="UniProtKB-KW"/>
</dbReference>
<dbReference type="GO" id="GO:0030488">
    <property type="term" value="P:tRNA methylation"/>
    <property type="evidence" value="ECO:0007669"/>
    <property type="project" value="TreeGrafter"/>
</dbReference>
<dbReference type="GO" id="GO:0002098">
    <property type="term" value="P:tRNA wobble uridine modification"/>
    <property type="evidence" value="ECO:0007669"/>
    <property type="project" value="TreeGrafter"/>
</dbReference>
<dbReference type="CDD" id="cd04164">
    <property type="entry name" value="trmE"/>
    <property type="match status" value="1"/>
</dbReference>
<dbReference type="CDD" id="cd14858">
    <property type="entry name" value="TrmE_N"/>
    <property type="match status" value="1"/>
</dbReference>
<dbReference type="Gene3D" id="3.40.50.300">
    <property type="entry name" value="P-loop containing nucleotide triphosphate hydrolases"/>
    <property type="match status" value="1"/>
</dbReference>
<dbReference type="Gene3D" id="3.30.1360.120">
    <property type="entry name" value="Probable tRNA modification gtpase trme, domain 1"/>
    <property type="match status" value="1"/>
</dbReference>
<dbReference type="Gene3D" id="1.20.120.430">
    <property type="entry name" value="tRNA modification GTPase MnmE domain 2"/>
    <property type="match status" value="1"/>
</dbReference>
<dbReference type="HAMAP" id="MF_00379">
    <property type="entry name" value="GTPase_MnmE"/>
    <property type="match status" value="1"/>
</dbReference>
<dbReference type="InterPro" id="IPR031168">
    <property type="entry name" value="G_TrmE"/>
</dbReference>
<dbReference type="InterPro" id="IPR006073">
    <property type="entry name" value="GTP-bd"/>
</dbReference>
<dbReference type="InterPro" id="IPR018948">
    <property type="entry name" value="GTP-bd_TrmE_N"/>
</dbReference>
<dbReference type="InterPro" id="IPR004520">
    <property type="entry name" value="GTPase_MnmE"/>
</dbReference>
<dbReference type="InterPro" id="IPR027368">
    <property type="entry name" value="MnmE_dom2"/>
</dbReference>
<dbReference type="InterPro" id="IPR025867">
    <property type="entry name" value="MnmE_helical"/>
</dbReference>
<dbReference type="InterPro" id="IPR027417">
    <property type="entry name" value="P-loop_NTPase"/>
</dbReference>
<dbReference type="InterPro" id="IPR005225">
    <property type="entry name" value="Small_GTP-bd"/>
</dbReference>
<dbReference type="InterPro" id="IPR027266">
    <property type="entry name" value="TrmE/GcvT_dom1"/>
</dbReference>
<dbReference type="NCBIfam" id="NF003661">
    <property type="entry name" value="PRK05291.1-3"/>
    <property type="match status" value="1"/>
</dbReference>
<dbReference type="NCBIfam" id="TIGR00231">
    <property type="entry name" value="small_GTP"/>
    <property type="match status" value="1"/>
</dbReference>
<dbReference type="PANTHER" id="PTHR42714">
    <property type="entry name" value="TRNA MODIFICATION GTPASE GTPBP3"/>
    <property type="match status" value="1"/>
</dbReference>
<dbReference type="PANTHER" id="PTHR42714:SF2">
    <property type="entry name" value="TRNA MODIFICATION GTPASE GTPBP3, MITOCHONDRIAL"/>
    <property type="match status" value="1"/>
</dbReference>
<dbReference type="Pfam" id="PF01926">
    <property type="entry name" value="MMR_HSR1"/>
    <property type="match status" value="1"/>
</dbReference>
<dbReference type="Pfam" id="PF12631">
    <property type="entry name" value="MnmE_helical"/>
    <property type="match status" value="1"/>
</dbReference>
<dbReference type="Pfam" id="PF10396">
    <property type="entry name" value="TrmE_N"/>
    <property type="match status" value="1"/>
</dbReference>
<dbReference type="SUPFAM" id="SSF52540">
    <property type="entry name" value="P-loop containing nucleoside triphosphate hydrolases"/>
    <property type="match status" value="1"/>
</dbReference>
<dbReference type="PROSITE" id="PS51709">
    <property type="entry name" value="G_TRME"/>
    <property type="match status" value="1"/>
</dbReference>
<feature type="chain" id="PRO_0000345693" description="tRNA modification GTPase MnmE">
    <location>
        <begin position="1"/>
        <end position="433"/>
    </location>
</feature>
<feature type="domain" description="TrmE-type G">
    <location>
        <begin position="216"/>
        <end position="359"/>
    </location>
</feature>
<feature type="binding site" evidence="1">
    <location>
        <position position="24"/>
    </location>
    <ligand>
        <name>(6S)-5-formyl-5,6,7,8-tetrahydrofolate</name>
        <dbReference type="ChEBI" id="CHEBI:57457"/>
    </ligand>
</feature>
<feature type="binding site" evidence="1">
    <location>
        <position position="81"/>
    </location>
    <ligand>
        <name>(6S)-5-formyl-5,6,7,8-tetrahydrofolate</name>
        <dbReference type="ChEBI" id="CHEBI:57457"/>
    </ligand>
</feature>
<feature type="binding site" evidence="1">
    <location>
        <position position="120"/>
    </location>
    <ligand>
        <name>(6S)-5-formyl-5,6,7,8-tetrahydrofolate</name>
        <dbReference type="ChEBI" id="CHEBI:57457"/>
    </ligand>
</feature>
<feature type="binding site" evidence="1">
    <location>
        <begin position="226"/>
        <end position="231"/>
    </location>
    <ligand>
        <name>GTP</name>
        <dbReference type="ChEBI" id="CHEBI:37565"/>
    </ligand>
</feature>
<feature type="binding site" evidence="1">
    <location>
        <position position="226"/>
    </location>
    <ligand>
        <name>K(+)</name>
        <dbReference type="ChEBI" id="CHEBI:29103"/>
    </ligand>
</feature>
<feature type="binding site" evidence="1">
    <location>
        <position position="230"/>
    </location>
    <ligand>
        <name>Mg(2+)</name>
        <dbReference type="ChEBI" id="CHEBI:18420"/>
    </ligand>
</feature>
<feature type="binding site" evidence="1">
    <location>
        <begin position="245"/>
        <end position="251"/>
    </location>
    <ligand>
        <name>GTP</name>
        <dbReference type="ChEBI" id="CHEBI:37565"/>
    </ligand>
</feature>
<feature type="binding site" evidence="1">
    <location>
        <position position="245"/>
    </location>
    <ligand>
        <name>K(+)</name>
        <dbReference type="ChEBI" id="CHEBI:29103"/>
    </ligand>
</feature>
<feature type="binding site" evidence="1">
    <location>
        <position position="247"/>
    </location>
    <ligand>
        <name>K(+)</name>
        <dbReference type="ChEBI" id="CHEBI:29103"/>
    </ligand>
</feature>
<feature type="binding site" evidence="1">
    <location>
        <position position="250"/>
    </location>
    <ligand>
        <name>K(+)</name>
        <dbReference type="ChEBI" id="CHEBI:29103"/>
    </ligand>
</feature>
<feature type="binding site" evidence="1">
    <location>
        <position position="251"/>
    </location>
    <ligand>
        <name>Mg(2+)</name>
        <dbReference type="ChEBI" id="CHEBI:18420"/>
    </ligand>
</feature>
<feature type="binding site" evidence="1">
    <location>
        <begin position="270"/>
        <end position="273"/>
    </location>
    <ligand>
        <name>GTP</name>
        <dbReference type="ChEBI" id="CHEBI:37565"/>
    </ligand>
</feature>
<feature type="binding site" evidence="1">
    <location>
        <begin position="340"/>
        <end position="342"/>
    </location>
    <ligand>
        <name>GTP</name>
        <dbReference type="ChEBI" id="CHEBI:37565"/>
    </ligand>
</feature>
<feature type="binding site" evidence="1">
    <location>
        <position position="433"/>
    </location>
    <ligand>
        <name>(6S)-5-formyl-5,6,7,8-tetrahydrofolate</name>
        <dbReference type="ChEBI" id="CHEBI:57457"/>
    </ligand>
</feature>
<proteinExistence type="inferred from homology"/>
<accession>A5G169</accession>
<comment type="function">
    <text evidence="1">Exhibits a very high intrinsic GTPase hydrolysis rate. Involved in the addition of a carboxymethylaminomethyl (cmnm) group at the wobble position (U34) of certain tRNAs, forming tRNA-cmnm(5)s(2)U34.</text>
</comment>
<comment type="cofactor">
    <cofactor evidence="1">
        <name>K(+)</name>
        <dbReference type="ChEBI" id="CHEBI:29103"/>
    </cofactor>
    <text evidence="1">Binds 1 potassium ion per subunit.</text>
</comment>
<comment type="subunit">
    <text evidence="1">Homodimer. Heterotetramer of two MnmE and two MnmG subunits.</text>
</comment>
<comment type="subcellular location">
    <subcellularLocation>
        <location evidence="1">Cytoplasm</location>
    </subcellularLocation>
</comment>
<comment type="similarity">
    <text evidence="1">Belongs to the TRAFAC class TrmE-Era-EngA-EngB-Septin-like GTPase superfamily. TrmE GTPase family.</text>
</comment>
<evidence type="ECO:0000255" key="1">
    <source>
        <dbReference type="HAMAP-Rule" id="MF_00379"/>
    </source>
</evidence>
<name>MNME_ACICJ</name>
<keyword id="KW-0963">Cytoplasm</keyword>
<keyword id="KW-0342">GTP-binding</keyword>
<keyword id="KW-0378">Hydrolase</keyword>
<keyword id="KW-0460">Magnesium</keyword>
<keyword id="KW-0479">Metal-binding</keyword>
<keyword id="KW-0547">Nucleotide-binding</keyword>
<keyword id="KW-0630">Potassium</keyword>
<keyword id="KW-1185">Reference proteome</keyword>
<keyword id="KW-0819">tRNA processing</keyword>
<gene>
    <name evidence="1" type="primary">mnmE</name>
    <name evidence="1" type="synonym">trmE</name>
    <name type="ordered locus">Acry_2407</name>
</gene>
<sequence>MSLAPSDVIFAPASGVGGAISLLRLSGAGVARVIGALAGSLPAPRRASLRSFRDGRRGIIDRGLLLWFPGPASVTGEDYAEFHLHGGRAVRAAITAALLDLGARPAEPGEFSRRAFLNSRLDLLEAEGIADLIDAETEAQRQLALDLAGGAMSRAVAAWREALIGLMAQLAALIDFADEDLPAEVEAAMLASMARLRDEIVAAIGAGLAAERLREGVEIVVLGAPNAGKSTLVNALAGEEVAIVSDIPGTTRDAIGVRLDLGGVPVRLVDTAGLRRSDDAIEAEGVRRAEAHARRADLLILCGAAPDFVVPDAPADVPALRIATKADLGGAVPAAMLAVSARTGAGLADLLAALRARVEALVERGAGPALPRPRQIACLRDVAAALDRALAIDVPELRAEEMQAAAVALARLTGTIGVEDVLDQVFSSFCIGK</sequence>
<organism>
    <name type="scientific">Acidiphilium cryptum (strain JF-5)</name>
    <dbReference type="NCBI Taxonomy" id="349163"/>
    <lineage>
        <taxon>Bacteria</taxon>
        <taxon>Pseudomonadati</taxon>
        <taxon>Pseudomonadota</taxon>
        <taxon>Alphaproteobacteria</taxon>
        <taxon>Acetobacterales</taxon>
        <taxon>Acidocellaceae</taxon>
        <taxon>Acidiphilium</taxon>
    </lineage>
</organism>